<protein>
    <recommendedName>
        <fullName evidence="1">Probable transcriptional regulatory protein lhv_0777</fullName>
    </recommendedName>
</protein>
<evidence type="ECO:0000255" key="1">
    <source>
        <dbReference type="HAMAP-Rule" id="MF_00693"/>
    </source>
</evidence>
<evidence type="ECO:0000256" key="2">
    <source>
        <dbReference type="SAM" id="MobiDB-lite"/>
    </source>
</evidence>
<name>Y777_LACH4</name>
<gene>
    <name type="ordered locus">lhv_0777</name>
</gene>
<comment type="subcellular location">
    <subcellularLocation>
        <location evidence="1">Cytoplasm</location>
    </subcellularLocation>
</comment>
<comment type="similarity">
    <text evidence="1">Belongs to the TACO1 family.</text>
</comment>
<organism>
    <name type="scientific">Lactobacillus helveticus (strain DPC 4571)</name>
    <dbReference type="NCBI Taxonomy" id="405566"/>
    <lineage>
        <taxon>Bacteria</taxon>
        <taxon>Bacillati</taxon>
        <taxon>Bacillota</taxon>
        <taxon>Bacilli</taxon>
        <taxon>Lactobacillales</taxon>
        <taxon>Lactobacillaceae</taxon>
        <taxon>Lactobacillus</taxon>
    </lineage>
</organism>
<accession>A8YUH0</accession>
<reference key="1">
    <citation type="journal article" date="2008" name="J. Bacteriol.">
        <title>Genome sequence of Lactobacillus helveticus: an organism distinguished by selective gene loss and IS element expansion.</title>
        <authorList>
            <person name="Callanan M."/>
            <person name="Kaleta P."/>
            <person name="O'Callaghan J."/>
            <person name="O'Sullivan O."/>
            <person name="Jordan K."/>
            <person name="McAuliffe O."/>
            <person name="Sangrador-Vegas A."/>
            <person name="Slattery L."/>
            <person name="Fitzgerald G.F."/>
            <person name="Beresford T."/>
            <person name="Ross R.P."/>
        </authorList>
    </citation>
    <scope>NUCLEOTIDE SEQUENCE [LARGE SCALE GENOMIC DNA]</scope>
    <source>
        <strain>DPC 4571</strain>
    </source>
</reference>
<sequence>MSGHSKWHNIQGRKNAQDAKRGKIFQKLSREIYMAAKSGGPDPDGNPTLRMVIDKARSNNMPKDNIKRAIKKAEGGSEEHYDEITYEGYAPGGVAVFVEALTDNKNRTASDVRVAFTRNGGSLGATGSVAYMFDRKGYIVIDRSTTDADEDQVLLDVMDAGGDDLQTSDDAFEIYTDPKQFADVRDALIKDGYKLADAELTMIPQNTTPVPADKKEQFEHLVDALEDSDDVQNVYTAAADED</sequence>
<keyword id="KW-0963">Cytoplasm</keyword>
<keyword id="KW-0238">DNA-binding</keyword>
<keyword id="KW-0804">Transcription</keyword>
<keyword id="KW-0805">Transcription regulation</keyword>
<feature type="chain" id="PRO_1000072754" description="Probable transcriptional regulatory protein lhv_0777">
    <location>
        <begin position="1"/>
        <end position="242"/>
    </location>
</feature>
<feature type="region of interest" description="Disordered" evidence="2">
    <location>
        <begin position="1"/>
        <end position="22"/>
    </location>
</feature>
<proteinExistence type="inferred from homology"/>
<dbReference type="EMBL" id="CP000517">
    <property type="protein sequence ID" value="ABX26908.1"/>
    <property type="molecule type" value="Genomic_DNA"/>
</dbReference>
<dbReference type="RefSeq" id="WP_003626106.1">
    <property type="nucleotide sequence ID" value="NC_010080.1"/>
</dbReference>
<dbReference type="SMR" id="A8YUH0"/>
<dbReference type="KEGG" id="lhe:lhv_0777"/>
<dbReference type="eggNOG" id="COG0217">
    <property type="taxonomic scope" value="Bacteria"/>
</dbReference>
<dbReference type="HOGENOM" id="CLU_062974_3_0_9"/>
<dbReference type="Proteomes" id="UP000000790">
    <property type="component" value="Chromosome"/>
</dbReference>
<dbReference type="GO" id="GO:0005829">
    <property type="term" value="C:cytosol"/>
    <property type="evidence" value="ECO:0007669"/>
    <property type="project" value="TreeGrafter"/>
</dbReference>
<dbReference type="GO" id="GO:0003677">
    <property type="term" value="F:DNA binding"/>
    <property type="evidence" value="ECO:0007669"/>
    <property type="project" value="UniProtKB-UniRule"/>
</dbReference>
<dbReference type="GO" id="GO:0006355">
    <property type="term" value="P:regulation of DNA-templated transcription"/>
    <property type="evidence" value="ECO:0007669"/>
    <property type="project" value="UniProtKB-UniRule"/>
</dbReference>
<dbReference type="FunFam" id="1.10.10.200:FF:000002">
    <property type="entry name" value="Probable transcriptional regulatory protein CLM62_37755"/>
    <property type="match status" value="1"/>
</dbReference>
<dbReference type="FunFam" id="3.30.70.980:FF:000002">
    <property type="entry name" value="Probable transcriptional regulatory protein YebC"/>
    <property type="match status" value="1"/>
</dbReference>
<dbReference type="Gene3D" id="1.10.10.200">
    <property type="match status" value="1"/>
</dbReference>
<dbReference type="Gene3D" id="3.30.70.980">
    <property type="match status" value="2"/>
</dbReference>
<dbReference type="HAMAP" id="MF_00693">
    <property type="entry name" value="Transcrip_reg_TACO1"/>
    <property type="match status" value="1"/>
</dbReference>
<dbReference type="InterPro" id="IPR017856">
    <property type="entry name" value="Integrase-like_N"/>
</dbReference>
<dbReference type="InterPro" id="IPR048300">
    <property type="entry name" value="TACO1_YebC-like_2nd/3rd_dom"/>
</dbReference>
<dbReference type="InterPro" id="IPR049083">
    <property type="entry name" value="TACO1_YebC_N"/>
</dbReference>
<dbReference type="InterPro" id="IPR002876">
    <property type="entry name" value="Transcrip_reg_TACO1-like"/>
</dbReference>
<dbReference type="InterPro" id="IPR026564">
    <property type="entry name" value="Transcrip_reg_TACO1-like_dom3"/>
</dbReference>
<dbReference type="InterPro" id="IPR029072">
    <property type="entry name" value="YebC-like"/>
</dbReference>
<dbReference type="NCBIfam" id="NF001030">
    <property type="entry name" value="PRK00110.1"/>
    <property type="match status" value="1"/>
</dbReference>
<dbReference type="NCBIfam" id="NF009044">
    <property type="entry name" value="PRK12378.1"/>
    <property type="match status" value="1"/>
</dbReference>
<dbReference type="NCBIfam" id="TIGR01033">
    <property type="entry name" value="YebC/PmpR family DNA-binding transcriptional regulator"/>
    <property type="match status" value="1"/>
</dbReference>
<dbReference type="PANTHER" id="PTHR12532:SF6">
    <property type="entry name" value="TRANSCRIPTIONAL REGULATORY PROTEIN YEBC-RELATED"/>
    <property type="match status" value="1"/>
</dbReference>
<dbReference type="PANTHER" id="PTHR12532">
    <property type="entry name" value="TRANSLATIONAL ACTIVATOR OF CYTOCHROME C OXIDASE 1"/>
    <property type="match status" value="1"/>
</dbReference>
<dbReference type="Pfam" id="PF20772">
    <property type="entry name" value="TACO1_YebC_N"/>
    <property type="match status" value="1"/>
</dbReference>
<dbReference type="Pfam" id="PF01709">
    <property type="entry name" value="Transcrip_reg"/>
    <property type="match status" value="1"/>
</dbReference>
<dbReference type="SUPFAM" id="SSF75625">
    <property type="entry name" value="YebC-like"/>
    <property type="match status" value="1"/>
</dbReference>